<dbReference type="EMBL" id="CP001401">
    <property type="protein sequence ID" value="ACP55331.1"/>
    <property type="molecule type" value="Genomic_DNA"/>
</dbReference>
<dbReference type="RefSeq" id="WP_012711397.1">
    <property type="nucleotide sequence ID" value="NC_012632.1"/>
</dbReference>
<dbReference type="SMR" id="C3N5Q6"/>
<dbReference type="KEGG" id="sim:M1627_1449"/>
<dbReference type="HOGENOM" id="CLU_080796_1_0_2"/>
<dbReference type="Proteomes" id="UP000002307">
    <property type="component" value="Chromosome"/>
</dbReference>
<dbReference type="GO" id="GO:0022625">
    <property type="term" value="C:cytosolic large ribosomal subunit"/>
    <property type="evidence" value="ECO:0007669"/>
    <property type="project" value="TreeGrafter"/>
</dbReference>
<dbReference type="GO" id="GO:0003723">
    <property type="term" value="F:RNA binding"/>
    <property type="evidence" value="ECO:0007669"/>
    <property type="project" value="TreeGrafter"/>
</dbReference>
<dbReference type="GO" id="GO:0003735">
    <property type="term" value="F:structural constituent of ribosome"/>
    <property type="evidence" value="ECO:0007669"/>
    <property type="project" value="InterPro"/>
</dbReference>
<dbReference type="GO" id="GO:0002181">
    <property type="term" value="P:cytoplasmic translation"/>
    <property type="evidence" value="ECO:0007669"/>
    <property type="project" value="TreeGrafter"/>
</dbReference>
<dbReference type="FunFam" id="3.40.1120.10:FF:000002">
    <property type="entry name" value="50S ribosomal protein L15e"/>
    <property type="match status" value="1"/>
</dbReference>
<dbReference type="Gene3D" id="3.40.1120.10">
    <property type="entry name" value="Ribosomal protein l15e"/>
    <property type="match status" value="1"/>
</dbReference>
<dbReference type="HAMAP" id="MF_00256">
    <property type="entry name" value="Ribosomal_eL15"/>
    <property type="match status" value="1"/>
</dbReference>
<dbReference type="InterPro" id="IPR024794">
    <property type="entry name" value="Rbsml_eL15_core_dom_sf"/>
</dbReference>
<dbReference type="InterPro" id="IPR000439">
    <property type="entry name" value="Ribosomal_eL15"/>
</dbReference>
<dbReference type="InterPro" id="IPR020926">
    <property type="entry name" value="Ribosomal_eL15_arc"/>
</dbReference>
<dbReference type="InterPro" id="IPR020925">
    <property type="entry name" value="Ribosomal_eL15_CS"/>
</dbReference>
<dbReference type="InterPro" id="IPR012678">
    <property type="entry name" value="Ribosomal_uL23/eL15/eS24_sf"/>
</dbReference>
<dbReference type="NCBIfam" id="NF003269">
    <property type="entry name" value="PRK04243.1"/>
    <property type="match status" value="1"/>
</dbReference>
<dbReference type="PANTHER" id="PTHR11847:SF4">
    <property type="entry name" value="LARGE RIBOSOMAL SUBUNIT PROTEIN EL15"/>
    <property type="match status" value="1"/>
</dbReference>
<dbReference type="PANTHER" id="PTHR11847">
    <property type="entry name" value="RIBOSOMAL PROTEIN L15"/>
    <property type="match status" value="1"/>
</dbReference>
<dbReference type="Pfam" id="PF00827">
    <property type="entry name" value="Ribosomal_L15e"/>
    <property type="match status" value="1"/>
</dbReference>
<dbReference type="SMART" id="SM01384">
    <property type="entry name" value="Ribosomal_L15e"/>
    <property type="match status" value="1"/>
</dbReference>
<dbReference type="SUPFAM" id="SSF54189">
    <property type="entry name" value="Ribosomal proteins S24e, L23 and L15e"/>
    <property type="match status" value="1"/>
</dbReference>
<dbReference type="PROSITE" id="PS01194">
    <property type="entry name" value="RIBOSOMAL_L15E"/>
    <property type="match status" value="1"/>
</dbReference>
<sequence length="216" mass="25677">MTLSVYHYIENTWNSEEWKKGVLRQRFIEWRKEPSIVRLAKPTRLNRARSLGYKAKQGFVIVRVRVRRGGLNKPRPNKGRRPKRMGVYGYGPAKGYKWIAEERAARKYPNLEVLGSYYVGEDGLYKYYEIIMVDPSHPVIKNDPNYKWLQDPSNRNRVFRGLTSAGKKARGLRKSKGFKGTVKHKWSRKQKEREEKKRHEASKYYRLQRYDKIPGK</sequence>
<reference key="1">
    <citation type="journal article" date="2009" name="Proc. Natl. Acad. Sci. U.S.A.">
        <title>Biogeography of the Sulfolobus islandicus pan-genome.</title>
        <authorList>
            <person name="Reno M.L."/>
            <person name="Held N.L."/>
            <person name="Fields C.J."/>
            <person name="Burke P.V."/>
            <person name="Whitaker R.J."/>
        </authorList>
    </citation>
    <scope>NUCLEOTIDE SEQUENCE [LARGE SCALE GENOMIC DNA]</scope>
    <source>
        <strain>M.16.27</strain>
    </source>
</reference>
<evidence type="ECO:0000255" key="1">
    <source>
        <dbReference type="HAMAP-Rule" id="MF_00256"/>
    </source>
</evidence>
<evidence type="ECO:0000256" key="2">
    <source>
        <dbReference type="SAM" id="MobiDB-lite"/>
    </source>
</evidence>
<evidence type="ECO:0000305" key="3"/>
<proteinExistence type="inferred from homology"/>
<keyword id="KW-0687">Ribonucleoprotein</keyword>
<keyword id="KW-0689">Ribosomal protein</keyword>
<comment type="similarity">
    <text evidence="1">Belongs to the eukaryotic ribosomal protein eL15 family.</text>
</comment>
<feature type="chain" id="PRO_1000204614" description="Large ribosomal subunit protein eL15">
    <location>
        <begin position="1"/>
        <end position="216"/>
    </location>
</feature>
<feature type="region of interest" description="Disordered" evidence="2">
    <location>
        <begin position="170"/>
        <end position="201"/>
    </location>
</feature>
<feature type="compositionally biased region" description="Basic residues" evidence="2">
    <location>
        <begin position="170"/>
        <end position="188"/>
    </location>
</feature>
<feature type="compositionally biased region" description="Basic and acidic residues" evidence="2">
    <location>
        <begin position="189"/>
        <end position="201"/>
    </location>
</feature>
<name>RL15E_SACI3</name>
<protein>
    <recommendedName>
        <fullName evidence="1">Large ribosomal subunit protein eL15</fullName>
    </recommendedName>
    <alternativeName>
        <fullName evidence="3">50S ribosomal protein L15e</fullName>
    </alternativeName>
</protein>
<accession>C3N5Q6</accession>
<organism>
    <name type="scientific">Saccharolobus islandicus (strain M.16.27)</name>
    <name type="common">Sulfolobus islandicus</name>
    <dbReference type="NCBI Taxonomy" id="427318"/>
    <lineage>
        <taxon>Archaea</taxon>
        <taxon>Thermoproteota</taxon>
        <taxon>Thermoprotei</taxon>
        <taxon>Sulfolobales</taxon>
        <taxon>Sulfolobaceae</taxon>
        <taxon>Saccharolobus</taxon>
    </lineage>
</organism>
<gene>
    <name evidence="1" type="primary">rpl15e</name>
    <name type="ordered locus">M1627_1449</name>
</gene>